<dbReference type="EMBL" id="AM933172">
    <property type="protein sequence ID" value="CAR35815.1"/>
    <property type="molecule type" value="Genomic_DNA"/>
</dbReference>
<dbReference type="RefSeq" id="WP_001054380.1">
    <property type="nucleotide sequence ID" value="NC_011294.1"/>
</dbReference>
<dbReference type="KEGG" id="set:SEN4262"/>
<dbReference type="HOGENOM" id="CLU_164736_0_0_6"/>
<dbReference type="Proteomes" id="UP000000613">
    <property type="component" value="Chromosome"/>
</dbReference>
<dbReference type="HAMAP" id="MF_00827">
    <property type="entry name" value="UPF0386"/>
    <property type="match status" value="1"/>
</dbReference>
<dbReference type="InterPro" id="IPR018654">
    <property type="entry name" value="YjhX_toxin"/>
</dbReference>
<dbReference type="NCBIfam" id="NF010240">
    <property type="entry name" value="PRK13687.1"/>
    <property type="match status" value="1"/>
</dbReference>
<dbReference type="Pfam" id="PF09857">
    <property type="entry name" value="YjhX_toxin"/>
    <property type="match status" value="1"/>
</dbReference>
<feature type="chain" id="PRO_1000200708" description="UPF0386 protein YjhX">
    <location>
        <begin position="1"/>
        <end position="85"/>
    </location>
</feature>
<accession>B5R1M7</accession>
<name>YJHX_SALEP</name>
<organism>
    <name type="scientific">Salmonella enteritidis PT4 (strain P125109)</name>
    <dbReference type="NCBI Taxonomy" id="550537"/>
    <lineage>
        <taxon>Bacteria</taxon>
        <taxon>Pseudomonadati</taxon>
        <taxon>Pseudomonadota</taxon>
        <taxon>Gammaproteobacteria</taxon>
        <taxon>Enterobacterales</taxon>
        <taxon>Enterobacteriaceae</taxon>
        <taxon>Salmonella</taxon>
    </lineage>
</organism>
<proteinExistence type="inferred from homology"/>
<gene>
    <name evidence="1" type="primary">yjhX</name>
    <name type="ordered locus">SEN4262</name>
</gene>
<reference key="1">
    <citation type="journal article" date="2008" name="Genome Res.">
        <title>Comparative genome analysis of Salmonella enteritidis PT4 and Salmonella gallinarum 287/91 provides insights into evolutionary and host adaptation pathways.</title>
        <authorList>
            <person name="Thomson N.R."/>
            <person name="Clayton D.J."/>
            <person name="Windhorst D."/>
            <person name="Vernikos G."/>
            <person name="Davidson S."/>
            <person name="Churcher C."/>
            <person name="Quail M.A."/>
            <person name="Stevens M."/>
            <person name="Jones M.A."/>
            <person name="Watson M."/>
            <person name="Barron A."/>
            <person name="Layton A."/>
            <person name="Pickard D."/>
            <person name="Kingsley R.A."/>
            <person name="Bignell A."/>
            <person name="Clark L."/>
            <person name="Harris B."/>
            <person name="Ormond D."/>
            <person name="Abdellah Z."/>
            <person name="Brooks K."/>
            <person name="Cherevach I."/>
            <person name="Chillingworth T."/>
            <person name="Woodward J."/>
            <person name="Norberczak H."/>
            <person name="Lord A."/>
            <person name="Arrowsmith C."/>
            <person name="Jagels K."/>
            <person name="Moule S."/>
            <person name="Mungall K."/>
            <person name="Saunders M."/>
            <person name="Whitehead S."/>
            <person name="Chabalgoity J.A."/>
            <person name="Maskell D."/>
            <person name="Humphreys T."/>
            <person name="Roberts M."/>
            <person name="Barrow P.A."/>
            <person name="Dougan G."/>
            <person name="Parkhill J."/>
        </authorList>
    </citation>
    <scope>NUCLEOTIDE SEQUENCE [LARGE SCALE GENOMIC DNA]</scope>
    <source>
        <strain>P125109</strain>
    </source>
</reference>
<sequence>MNLSRQEQRTLHVLAKGGRITHIRDASGRVTAVECYSREGLLLADCTLAVFKKLKTKKLIKSVNGQPYRINTTGLNNVRAQPDNR</sequence>
<protein>
    <recommendedName>
        <fullName evidence="1">UPF0386 protein YjhX</fullName>
    </recommendedName>
</protein>
<comment type="similarity">
    <text evidence="1">Belongs to the UPF0386 family.</text>
</comment>
<evidence type="ECO:0000255" key="1">
    <source>
        <dbReference type="HAMAP-Rule" id="MF_00827"/>
    </source>
</evidence>